<reference key="1">
    <citation type="journal article" date="2008" name="J. Bacteriol.">
        <title>The pangenome structure of Escherichia coli: comparative genomic analysis of E. coli commensal and pathogenic isolates.</title>
        <authorList>
            <person name="Rasko D.A."/>
            <person name="Rosovitz M.J."/>
            <person name="Myers G.S.A."/>
            <person name="Mongodin E.F."/>
            <person name="Fricke W.F."/>
            <person name="Gajer P."/>
            <person name="Crabtree J."/>
            <person name="Sebaihia M."/>
            <person name="Thomson N.R."/>
            <person name="Chaudhuri R."/>
            <person name="Henderson I.R."/>
            <person name="Sperandio V."/>
            <person name="Ravel J."/>
        </authorList>
    </citation>
    <scope>NUCLEOTIDE SEQUENCE [LARGE SCALE GENOMIC DNA]</scope>
    <source>
        <strain>E24377A / ETEC</strain>
    </source>
</reference>
<sequence length="128" mass="13652">MRFAIVVTGPAYGTQQASSAFQFAQALIVEGHELSSVFFYREGVYNANQLTSPASDEFDLVRGWQQLNAQHGVALNICVAAALRRGIVDETEAGRLGLASSNLQPGFTLSGLGALAEASLTCDRVVQF</sequence>
<keyword id="KW-0963">Cytoplasm</keyword>
<keyword id="KW-1185">Reference proteome</keyword>
<keyword id="KW-0808">Transferase</keyword>
<keyword id="KW-0819">tRNA processing</keyword>
<protein>
    <recommendedName>
        <fullName evidence="1">Sulfurtransferase TusD</fullName>
        <ecNumber evidence="1">2.8.1.-</ecNumber>
    </recommendedName>
    <alternativeName>
        <fullName evidence="1">tRNA 2-thiouridine synthesizing protein D</fullName>
    </alternativeName>
</protein>
<dbReference type="EC" id="2.8.1.-" evidence="1"/>
<dbReference type="EMBL" id="CP000800">
    <property type="protein sequence ID" value="ABV20228.1"/>
    <property type="molecule type" value="Genomic_DNA"/>
</dbReference>
<dbReference type="RefSeq" id="WP_001209710.1">
    <property type="nucleotide sequence ID" value="NC_009801.1"/>
</dbReference>
<dbReference type="SMR" id="A7ZSM0"/>
<dbReference type="GeneID" id="75206288"/>
<dbReference type="KEGG" id="ecw:EcE24377A_3814"/>
<dbReference type="HOGENOM" id="CLU_132095_0_0_6"/>
<dbReference type="Proteomes" id="UP000001122">
    <property type="component" value="Chromosome"/>
</dbReference>
<dbReference type="GO" id="GO:1990228">
    <property type="term" value="C:sulfurtransferase complex"/>
    <property type="evidence" value="ECO:0007669"/>
    <property type="project" value="TreeGrafter"/>
</dbReference>
<dbReference type="GO" id="GO:0097163">
    <property type="term" value="F:sulfur carrier activity"/>
    <property type="evidence" value="ECO:0007669"/>
    <property type="project" value="TreeGrafter"/>
</dbReference>
<dbReference type="GO" id="GO:0016783">
    <property type="term" value="F:sulfurtransferase activity"/>
    <property type="evidence" value="ECO:0007669"/>
    <property type="project" value="UniProtKB-UniRule"/>
</dbReference>
<dbReference type="GO" id="GO:0002143">
    <property type="term" value="P:tRNA wobble position uridine thiolation"/>
    <property type="evidence" value="ECO:0007669"/>
    <property type="project" value="TreeGrafter"/>
</dbReference>
<dbReference type="FunFam" id="3.40.1260.10:FF:000001">
    <property type="entry name" value="Sulfurtransferase TusD"/>
    <property type="match status" value="1"/>
</dbReference>
<dbReference type="Gene3D" id="3.40.1260.10">
    <property type="entry name" value="DsrEFH-like"/>
    <property type="match status" value="1"/>
</dbReference>
<dbReference type="HAMAP" id="MF_00390">
    <property type="entry name" value="Thiourid_synth_D"/>
    <property type="match status" value="1"/>
</dbReference>
<dbReference type="InterPro" id="IPR027396">
    <property type="entry name" value="DsrEFH-like"/>
</dbReference>
<dbReference type="InterPro" id="IPR003787">
    <property type="entry name" value="Sulphur_relay_DsrE/F-like"/>
</dbReference>
<dbReference type="InterPro" id="IPR017463">
    <property type="entry name" value="Sulphur_relay_TusD/DsrE"/>
</dbReference>
<dbReference type="NCBIfam" id="NF001237">
    <property type="entry name" value="PRK00207.1"/>
    <property type="match status" value="1"/>
</dbReference>
<dbReference type="NCBIfam" id="TIGR03012">
    <property type="entry name" value="sulf_tusD_dsrE"/>
    <property type="match status" value="1"/>
</dbReference>
<dbReference type="PANTHER" id="PTHR34874">
    <property type="entry name" value="PROTEIN YCHN"/>
    <property type="match status" value="1"/>
</dbReference>
<dbReference type="PANTHER" id="PTHR34874:SF3">
    <property type="entry name" value="SULFURTRANSFERASE TUSD"/>
    <property type="match status" value="1"/>
</dbReference>
<dbReference type="Pfam" id="PF02635">
    <property type="entry name" value="DsrE"/>
    <property type="match status" value="1"/>
</dbReference>
<dbReference type="SUPFAM" id="SSF75169">
    <property type="entry name" value="DsrEFH-like"/>
    <property type="match status" value="1"/>
</dbReference>
<proteinExistence type="inferred from homology"/>
<accession>A7ZSM0</accession>
<feature type="chain" id="PRO_1000060746" description="Sulfurtransferase TusD">
    <location>
        <begin position="1"/>
        <end position="128"/>
    </location>
</feature>
<feature type="active site" description="Cysteine persulfide intermediate" evidence="1">
    <location>
        <position position="78"/>
    </location>
</feature>
<name>TUSD_ECO24</name>
<comment type="function">
    <text evidence="1">Part of a sulfur-relay system required for 2-thiolation of 5-methylaminomethyl-2-thiouridine (mnm(5)s(2)U) at tRNA wobble positions. Accepts sulfur from TusA and transfers it in turn to TusE.</text>
</comment>
<comment type="subunit">
    <text evidence="1">Heterohexamer, formed by a dimer of trimers. The hexameric TusBCD complex contains 2 copies each of TusB, TusC and TusD. The TusBCD complex interacts with TusE.</text>
</comment>
<comment type="subcellular location">
    <subcellularLocation>
        <location evidence="1">Cytoplasm</location>
    </subcellularLocation>
</comment>
<comment type="similarity">
    <text evidence="1">Belongs to the DsrE/TusD family.</text>
</comment>
<evidence type="ECO:0000255" key="1">
    <source>
        <dbReference type="HAMAP-Rule" id="MF_00390"/>
    </source>
</evidence>
<organism>
    <name type="scientific">Escherichia coli O139:H28 (strain E24377A / ETEC)</name>
    <dbReference type="NCBI Taxonomy" id="331111"/>
    <lineage>
        <taxon>Bacteria</taxon>
        <taxon>Pseudomonadati</taxon>
        <taxon>Pseudomonadota</taxon>
        <taxon>Gammaproteobacteria</taxon>
        <taxon>Enterobacterales</taxon>
        <taxon>Enterobacteriaceae</taxon>
        <taxon>Escherichia</taxon>
    </lineage>
</organism>
<gene>
    <name evidence="1" type="primary">tusD</name>
    <name type="ordered locus">EcE24377A_3814</name>
</gene>